<dbReference type="EC" id="3.13.2.1"/>
<dbReference type="EMBL" id="AK053527">
    <property type="protein sequence ID" value="BAC35415.1"/>
    <property type="molecule type" value="mRNA"/>
</dbReference>
<dbReference type="EMBL" id="BC079660">
    <property type="protein sequence ID" value="AAH79660.1"/>
    <property type="molecule type" value="mRNA"/>
</dbReference>
<dbReference type="CCDS" id="CCDS19966.3">
    <molecule id="Q68FL4-1"/>
</dbReference>
<dbReference type="CCDS" id="CCDS51738.1">
    <molecule id="Q68FL4-2"/>
</dbReference>
<dbReference type="RefSeq" id="NP_001164471.2">
    <property type="nucleotide sequence ID" value="NM_001171000.2"/>
</dbReference>
<dbReference type="RefSeq" id="NP_001164472.1">
    <molecule id="Q68FL4-2"/>
    <property type="nucleotide sequence ID" value="NM_001171001.1"/>
</dbReference>
<dbReference type="RefSeq" id="NP_067389.5">
    <molecule id="Q68FL4-1"/>
    <property type="nucleotide sequence ID" value="NM_021414.6"/>
</dbReference>
<dbReference type="SMR" id="Q68FL4"/>
<dbReference type="BioGRID" id="216676">
    <property type="interactions" value="7"/>
</dbReference>
<dbReference type="FunCoup" id="Q68FL4">
    <property type="interactions" value="1541"/>
</dbReference>
<dbReference type="STRING" id="10090.ENSMUSP00000110897"/>
<dbReference type="GlyGen" id="Q68FL4">
    <property type="glycosylation" value="2 sites, 1 O-linked glycan (1 site)"/>
</dbReference>
<dbReference type="iPTMnet" id="Q68FL4"/>
<dbReference type="PhosphoSitePlus" id="Q68FL4"/>
<dbReference type="SwissPalm" id="Q68FL4"/>
<dbReference type="jPOST" id="Q68FL4"/>
<dbReference type="PaxDb" id="10090-ENSMUSP00000110897"/>
<dbReference type="ProteomicsDB" id="253393">
    <molecule id="Q68FL4-1"/>
</dbReference>
<dbReference type="ProteomicsDB" id="253394">
    <molecule id="Q68FL4-2"/>
</dbReference>
<dbReference type="Pumba" id="Q68FL4"/>
<dbReference type="Antibodypedia" id="17876">
    <property type="antibodies" value="66 antibodies from 18 providers"/>
</dbReference>
<dbReference type="DNASU" id="74340"/>
<dbReference type="Ensembl" id="ENSMUST00000115238.10">
    <molecule id="Q68FL4-2"/>
    <property type="protein sequence ID" value="ENSMUSP00000110893.4"/>
    <property type="gene ID" value="ENSMUSG00000029772.18"/>
</dbReference>
<dbReference type="Ensembl" id="ENSMUST00000115242.9">
    <molecule id="Q68FL4-1"/>
    <property type="protein sequence ID" value="ENSMUSP00000110897.3"/>
    <property type="gene ID" value="ENSMUSG00000029772.18"/>
</dbReference>
<dbReference type="GeneID" id="74340"/>
<dbReference type="KEGG" id="mmu:74340"/>
<dbReference type="UCSC" id="uc009bei.2">
    <molecule id="Q68FL4-1"/>
    <property type="organism name" value="mouse"/>
</dbReference>
<dbReference type="UCSC" id="uc009bek.2">
    <molecule id="Q68FL4-2"/>
    <property type="organism name" value="mouse"/>
</dbReference>
<dbReference type="AGR" id="MGI:1921590"/>
<dbReference type="CTD" id="23382"/>
<dbReference type="MGI" id="MGI:1921590">
    <property type="gene designation" value="Ahcyl2"/>
</dbReference>
<dbReference type="VEuPathDB" id="HostDB:ENSMUSG00000029772"/>
<dbReference type="eggNOG" id="KOG1370">
    <property type="taxonomic scope" value="Eukaryota"/>
</dbReference>
<dbReference type="GeneTree" id="ENSGT00950000182981"/>
<dbReference type="InParanoid" id="Q68FL4"/>
<dbReference type="OMA" id="IVITCTX"/>
<dbReference type="OrthoDB" id="10007170at2759"/>
<dbReference type="PhylomeDB" id="Q68FL4"/>
<dbReference type="TreeFam" id="TF300415"/>
<dbReference type="Reactome" id="R-MMU-425381">
    <property type="pathway name" value="Bicarbonate transporters"/>
</dbReference>
<dbReference type="UniPathway" id="UPA00314">
    <property type="reaction ID" value="UER00076"/>
</dbReference>
<dbReference type="BioGRID-ORCS" id="74340">
    <property type="hits" value="0 hits in 76 CRISPR screens"/>
</dbReference>
<dbReference type="ChiTaRS" id="Ahcyl2">
    <property type="organism name" value="mouse"/>
</dbReference>
<dbReference type="PRO" id="PR:Q68FL4"/>
<dbReference type="Proteomes" id="UP000000589">
    <property type="component" value="Chromosome 6"/>
</dbReference>
<dbReference type="RNAct" id="Q68FL4">
    <property type="molecule type" value="protein"/>
</dbReference>
<dbReference type="Bgee" id="ENSMUSG00000029772">
    <property type="expression patterns" value="Expressed in choroid plexus epithelium and 262 other cell types or tissues"/>
</dbReference>
<dbReference type="ExpressionAtlas" id="Q68FL4">
    <property type="expression patterns" value="baseline and differential"/>
</dbReference>
<dbReference type="GO" id="GO:0005829">
    <property type="term" value="C:cytosol"/>
    <property type="evidence" value="ECO:0000314"/>
    <property type="project" value="UniProtKB"/>
</dbReference>
<dbReference type="GO" id="GO:0005783">
    <property type="term" value="C:endoplasmic reticulum"/>
    <property type="evidence" value="ECO:0007669"/>
    <property type="project" value="UniProtKB-KW"/>
</dbReference>
<dbReference type="GO" id="GO:0043231">
    <property type="term" value="C:intracellular membrane-bounded organelle"/>
    <property type="evidence" value="ECO:0000314"/>
    <property type="project" value="UniProtKB"/>
</dbReference>
<dbReference type="GO" id="GO:0043005">
    <property type="term" value="C:neuron projection"/>
    <property type="evidence" value="ECO:0000314"/>
    <property type="project" value="UniProtKB"/>
</dbReference>
<dbReference type="GO" id="GO:0004013">
    <property type="term" value="F:adenosylhomocysteinase activity"/>
    <property type="evidence" value="ECO:0007669"/>
    <property type="project" value="RHEA"/>
</dbReference>
<dbReference type="GO" id="GO:0006730">
    <property type="term" value="P:one-carbon metabolic process"/>
    <property type="evidence" value="ECO:0007669"/>
    <property type="project" value="UniProtKB-KW"/>
</dbReference>
<dbReference type="CDD" id="cd00401">
    <property type="entry name" value="SAHH"/>
    <property type="match status" value="1"/>
</dbReference>
<dbReference type="FunFam" id="3.40.50.1480:FF:000002">
    <property type="entry name" value="Adenosylhomocysteinase"/>
    <property type="match status" value="1"/>
</dbReference>
<dbReference type="FunFam" id="3.40.50.1480:FF:000007">
    <property type="entry name" value="Adenosylhomocysteinase"/>
    <property type="match status" value="1"/>
</dbReference>
<dbReference type="FunFam" id="3.40.50.720:FF:000035">
    <property type="entry name" value="Adenosylhomocysteinase"/>
    <property type="match status" value="1"/>
</dbReference>
<dbReference type="FunFam" id="3.40.50.1480:FF:000009">
    <property type="entry name" value="Adenosylhomocysteinase like 2"/>
    <property type="match status" value="1"/>
</dbReference>
<dbReference type="Gene3D" id="3.40.50.1480">
    <property type="entry name" value="Adenosylhomocysteinase-like"/>
    <property type="match status" value="3"/>
</dbReference>
<dbReference type="Gene3D" id="3.40.50.720">
    <property type="entry name" value="NAD(P)-binding Rossmann-like Domain"/>
    <property type="match status" value="1"/>
</dbReference>
<dbReference type="InterPro" id="IPR042172">
    <property type="entry name" value="Adenosylhomocyst_ase-like_sf"/>
</dbReference>
<dbReference type="InterPro" id="IPR000043">
    <property type="entry name" value="Adenosylhomocysteinase-like"/>
</dbReference>
<dbReference type="InterPro" id="IPR015878">
    <property type="entry name" value="Ado_hCys_hydrolase_NAD-bd"/>
</dbReference>
<dbReference type="InterPro" id="IPR036291">
    <property type="entry name" value="NAD(P)-bd_dom_sf"/>
</dbReference>
<dbReference type="InterPro" id="IPR020082">
    <property type="entry name" value="S-Ado-L-homoCys_hydrolase_CS"/>
</dbReference>
<dbReference type="NCBIfam" id="TIGR00936">
    <property type="entry name" value="ahcY"/>
    <property type="match status" value="1"/>
</dbReference>
<dbReference type="NCBIfam" id="NF004005">
    <property type="entry name" value="PRK05476.2-3"/>
    <property type="match status" value="1"/>
</dbReference>
<dbReference type="PANTHER" id="PTHR23420">
    <property type="entry name" value="ADENOSYLHOMOCYSTEINASE"/>
    <property type="match status" value="1"/>
</dbReference>
<dbReference type="PANTHER" id="PTHR23420:SF2">
    <property type="entry name" value="ADENOSYLHOMOCYSTEINASE 3"/>
    <property type="match status" value="1"/>
</dbReference>
<dbReference type="Pfam" id="PF05221">
    <property type="entry name" value="AdoHcyase"/>
    <property type="match status" value="1"/>
</dbReference>
<dbReference type="Pfam" id="PF00670">
    <property type="entry name" value="AdoHcyase_NAD"/>
    <property type="match status" value="1"/>
</dbReference>
<dbReference type="SMART" id="SM00996">
    <property type="entry name" value="AdoHcyase"/>
    <property type="match status" value="1"/>
</dbReference>
<dbReference type="SMART" id="SM00997">
    <property type="entry name" value="AdoHcyase_NAD"/>
    <property type="match status" value="1"/>
</dbReference>
<dbReference type="SUPFAM" id="SSF52283">
    <property type="entry name" value="Formate/glycerate dehydrogenase catalytic domain-like"/>
    <property type="match status" value="1"/>
</dbReference>
<dbReference type="SUPFAM" id="SSF51735">
    <property type="entry name" value="NAD(P)-binding Rossmann-fold domains"/>
    <property type="match status" value="1"/>
</dbReference>
<dbReference type="PROSITE" id="PS00738">
    <property type="entry name" value="ADOHCYASE_1"/>
    <property type="match status" value="1"/>
</dbReference>
<dbReference type="PROSITE" id="PS00739">
    <property type="entry name" value="ADOHCYASE_2"/>
    <property type="match status" value="1"/>
</dbReference>
<reference key="1">
    <citation type="journal article" date="2005" name="Science">
        <title>The transcriptional landscape of the mammalian genome.</title>
        <authorList>
            <person name="Carninci P."/>
            <person name="Kasukawa T."/>
            <person name="Katayama S."/>
            <person name="Gough J."/>
            <person name="Frith M.C."/>
            <person name="Maeda N."/>
            <person name="Oyama R."/>
            <person name="Ravasi T."/>
            <person name="Lenhard B."/>
            <person name="Wells C."/>
            <person name="Kodzius R."/>
            <person name="Shimokawa K."/>
            <person name="Bajic V.B."/>
            <person name="Brenner S.E."/>
            <person name="Batalov S."/>
            <person name="Forrest A.R."/>
            <person name="Zavolan M."/>
            <person name="Davis M.J."/>
            <person name="Wilming L.G."/>
            <person name="Aidinis V."/>
            <person name="Allen J.E."/>
            <person name="Ambesi-Impiombato A."/>
            <person name="Apweiler R."/>
            <person name="Aturaliya R.N."/>
            <person name="Bailey T.L."/>
            <person name="Bansal M."/>
            <person name="Baxter L."/>
            <person name="Beisel K.W."/>
            <person name="Bersano T."/>
            <person name="Bono H."/>
            <person name="Chalk A.M."/>
            <person name="Chiu K.P."/>
            <person name="Choudhary V."/>
            <person name="Christoffels A."/>
            <person name="Clutterbuck D.R."/>
            <person name="Crowe M.L."/>
            <person name="Dalla E."/>
            <person name="Dalrymple B.P."/>
            <person name="de Bono B."/>
            <person name="Della Gatta G."/>
            <person name="di Bernardo D."/>
            <person name="Down T."/>
            <person name="Engstrom P."/>
            <person name="Fagiolini M."/>
            <person name="Faulkner G."/>
            <person name="Fletcher C.F."/>
            <person name="Fukushima T."/>
            <person name="Furuno M."/>
            <person name="Futaki S."/>
            <person name="Gariboldi M."/>
            <person name="Georgii-Hemming P."/>
            <person name="Gingeras T.R."/>
            <person name="Gojobori T."/>
            <person name="Green R.E."/>
            <person name="Gustincich S."/>
            <person name="Harbers M."/>
            <person name="Hayashi Y."/>
            <person name="Hensch T.K."/>
            <person name="Hirokawa N."/>
            <person name="Hill D."/>
            <person name="Huminiecki L."/>
            <person name="Iacono M."/>
            <person name="Ikeo K."/>
            <person name="Iwama A."/>
            <person name="Ishikawa T."/>
            <person name="Jakt M."/>
            <person name="Kanapin A."/>
            <person name="Katoh M."/>
            <person name="Kawasawa Y."/>
            <person name="Kelso J."/>
            <person name="Kitamura H."/>
            <person name="Kitano H."/>
            <person name="Kollias G."/>
            <person name="Krishnan S.P."/>
            <person name="Kruger A."/>
            <person name="Kummerfeld S.K."/>
            <person name="Kurochkin I.V."/>
            <person name="Lareau L.F."/>
            <person name="Lazarevic D."/>
            <person name="Lipovich L."/>
            <person name="Liu J."/>
            <person name="Liuni S."/>
            <person name="McWilliam S."/>
            <person name="Madan Babu M."/>
            <person name="Madera M."/>
            <person name="Marchionni L."/>
            <person name="Matsuda H."/>
            <person name="Matsuzawa S."/>
            <person name="Miki H."/>
            <person name="Mignone F."/>
            <person name="Miyake S."/>
            <person name="Morris K."/>
            <person name="Mottagui-Tabar S."/>
            <person name="Mulder N."/>
            <person name="Nakano N."/>
            <person name="Nakauchi H."/>
            <person name="Ng P."/>
            <person name="Nilsson R."/>
            <person name="Nishiguchi S."/>
            <person name="Nishikawa S."/>
            <person name="Nori F."/>
            <person name="Ohara O."/>
            <person name="Okazaki Y."/>
            <person name="Orlando V."/>
            <person name="Pang K.C."/>
            <person name="Pavan W.J."/>
            <person name="Pavesi G."/>
            <person name="Pesole G."/>
            <person name="Petrovsky N."/>
            <person name="Piazza S."/>
            <person name="Reed J."/>
            <person name="Reid J.F."/>
            <person name="Ring B.Z."/>
            <person name="Ringwald M."/>
            <person name="Rost B."/>
            <person name="Ruan Y."/>
            <person name="Salzberg S.L."/>
            <person name="Sandelin A."/>
            <person name="Schneider C."/>
            <person name="Schoenbach C."/>
            <person name="Sekiguchi K."/>
            <person name="Semple C.A."/>
            <person name="Seno S."/>
            <person name="Sessa L."/>
            <person name="Sheng Y."/>
            <person name="Shibata Y."/>
            <person name="Shimada H."/>
            <person name="Shimada K."/>
            <person name="Silva D."/>
            <person name="Sinclair B."/>
            <person name="Sperling S."/>
            <person name="Stupka E."/>
            <person name="Sugiura K."/>
            <person name="Sultana R."/>
            <person name="Takenaka Y."/>
            <person name="Taki K."/>
            <person name="Tammoja K."/>
            <person name="Tan S.L."/>
            <person name="Tang S."/>
            <person name="Taylor M.S."/>
            <person name="Tegner J."/>
            <person name="Teichmann S.A."/>
            <person name="Ueda H.R."/>
            <person name="van Nimwegen E."/>
            <person name="Verardo R."/>
            <person name="Wei C.L."/>
            <person name="Yagi K."/>
            <person name="Yamanishi H."/>
            <person name="Zabarovsky E."/>
            <person name="Zhu S."/>
            <person name="Zimmer A."/>
            <person name="Hide W."/>
            <person name="Bult C."/>
            <person name="Grimmond S.M."/>
            <person name="Teasdale R.D."/>
            <person name="Liu E.T."/>
            <person name="Brusic V."/>
            <person name="Quackenbush J."/>
            <person name="Wahlestedt C."/>
            <person name="Mattick J.S."/>
            <person name="Hume D.A."/>
            <person name="Kai C."/>
            <person name="Sasaki D."/>
            <person name="Tomaru Y."/>
            <person name="Fukuda S."/>
            <person name="Kanamori-Katayama M."/>
            <person name="Suzuki M."/>
            <person name="Aoki J."/>
            <person name="Arakawa T."/>
            <person name="Iida J."/>
            <person name="Imamura K."/>
            <person name="Itoh M."/>
            <person name="Kato T."/>
            <person name="Kawaji H."/>
            <person name="Kawagashira N."/>
            <person name="Kawashima T."/>
            <person name="Kojima M."/>
            <person name="Kondo S."/>
            <person name="Konno H."/>
            <person name="Nakano K."/>
            <person name="Ninomiya N."/>
            <person name="Nishio T."/>
            <person name="Okada M."/>
            <person name="Plessy C."/>
            <person name="Shibata K."/>
            <person name="Shiraki T."/>
            <person name="Suzuki S."/>
            <person name="Tagami M."/>
            <person name="Waki K."/>
            <person name="Watahiki A."/>
            <person name="Okamura-Oho Y."/>
            <person name="Suzuki H."/>
            <person name="Kawai J."/>
            <person name="Hayashizaki Y."/>
        </authorList>
    </citation>
    <scope>NUCLEOTIDE SEQUENCE [LARGE SCALE MRNA] (ISOFORM 2)</scope>
    <source>
        <strain>C57BL/6J</strain>
        <tissue>Eye</tissue>
    </source>
</reference>
<reference key="2">
    <citation type="journal article" date="2004" name="Genome Res.">
        <title>The status, quality, and expansion of the NIH full-length cDNA project: the Mammalian Gene Collection (MGC).</title>
        <authorList>
            <consortium name="The MGC Project Team"/>
        </authorList>
    </citation>
    <scope>NUCLEOTIDE SEQUENCE [LARGE SCALE MRNA] (ISOFORM 1)</scope>
    <source>
        <strain>C57BL/6J</strain>
        <tissue>Brain</tissue>
    </source>
</reference>
<reference key="3">
    <citation type="journal article" date="2007" name="Mol. Cell. Proteomics">
        <title>Qualitative and quantitative analyses of protein phosphorylation in naive and stimulated mouse synaptosomal preparations.</title>
        <authorList>
            <person name="Munton R.P."/>
            <person name="Tweedie-Cullen R."/>
            <person name="Livingstone-Zatchej M."/>
            <person name="Weinandy F."/>
            <person name="Waidelich M."/>
            <person name="Longo D."/>
            <person name="Gehrig P."/>
            <person name="Potthast F."/>
            <person name="Rutishauser D."/>
            <person name="Gerrits B."/>
            <person name="Panse C."/>
            <person name="Schlapbach R."/>
            <person name="Mansuy I.M."/>
        </authorList>
    </citation>
    <scope>IDENTIFICATION BY MASS SPECTROMETRY [LARGE SCALE ANALYSIS]</scope>
    <source>
        <tissue>Brain cortex</tissue>
    </source>
</reference>
<reference key="4">
    <citation type="journal article" date="2009" name="J. Neurochem.">
        <title>An IRBIT homologue lacks binding activity to inositol 1,4,5-trisphosphate receptor due to the unique N-terminal appendage.</title>
        <authorList>
            <person name="Ando H."/>
            <person name="Mizutani A."/>
            <person name="Mikoshiba K."/>
        </authorList>
    </citation>
    <scope>TISSUE SPECIFICITY</scope>
    <scope>SUBCELLULAR LOCATION</scope>
    <scope>PHOSPHORYLATION</scope>
</reference>
<reference key="5">
    <citation type="journal article" date="2010" name="Cell">
        <title>A tissue-specific atlas of mouse protein phosphorylation and expression.</title>
        <authorList>
            <person name="Huttlin E.L."/>
            <person name="Jedrychowski M.P."/>
            <person name="Elias J.E."/>
            <person name="Goswami T."/>
            <person name="Rad R."/>
            <person name="Beausoleil S.A."/>
            <person name="Villen J."/>
            <person name="Haas W."/>
            <person name="Sowa M.E."/>
            <person name="Gygi S.P."/>
        </authorList>
    </citation>
    <scope>PHOSPHORYLATION [LARGE SCALE ANALYSIS] AT SER-109</scope>
    <scope>IDENTIFICATION BY MASS SPECTROMETRY [LARGE SCALE ANALYSIS]</scope>
    <source>
        <tissue>Brain</tissue>
        <tissue>Brown adipose tissue</tissue>
        <tissue>Kidney</tissue>
        <tissue>Lung</tissue>
        <tissue>Pancreas</tissue>
        <tissue>Spleen</tissue>
        <tissue>Testis</tissue>
    </source>
</reference>
<proteinExistence type="evidence at protein level"/>
<gene>
    <name type="primary">Ahcyl2</name>
</gene>
<name>SAHH3_MOUSE</name>
<accession>Q68FL4</accession>
<accession>Q8BIH1</accession>
<feature type="initiator methionine" description="Removed" evidence="3">
    <location>
        <position position="1"/>
    </location>
</feature>
<feature type="chain" id="PRO_0000230301" description="Putative adenosylhomocysteinase 3">
    <location>
        <begin position="2"/>
        <end position="613"/>
    </location>
</feature>
<feature type="region of interest" description="Disordered" evidence="4">
    <location>
        <begin position="1"/>
        <end position="186"/>
    </location>
</feature>
<feature type="region of interest" description="LISN domain, inhibits interaction with ITPR1" evidence="3">
    <location>
        <begin position="2"/>
        <end position="111"/>
    </location>
</feature>
<feature type="compositionally biased region" description="Low complexity" evidence="4">
    <location>
        <begin position="1"/>
        <end position="14"/>
    </location>
</feature>
<feature type="compositionally biased region" description="Low complexity" evidence="4">
    <location>
        <begin position="35"/>
        <end position="44"/>
    </location>
</feature>
<feature type="compositionally biased region" description="Pro residues" evidence="4">
    <location>
        <begin position="52"/>
        <end position="68"/>
    </location>
</feature>
<feature type="compositionally biased region" description="Low complexity" evidence="4">
    <location>
        <begin position="70"/>
        <end position="80"/>
    </location>
</feature>
<feature type="compositionally biased region" description="Basic residues" evidence="4">
    <location>
        <begin position="137"/>
        <end position="146"/>
    </location>
</feature>
<feature type="compositionally biased region" description="Low complexity" evidence="4">
    <location>
        <begin position="147"/>
        <end position="166"/>
    </location>
</feature>
<feature type="binding site" evidence="1">
    <location>
        <position position="238"/>
    </location>
    <ligand>
        <name>substrate</name>
    </ligand>
</feature>
<feature type="binding site" evidence="1">
    <location>
        <position position="312"/>
    </location>
    <ligand>
        <name>substrate</name>
    </ligand>
</feature>
<feature type="binding site" evidence="1">
    <location>
        <position position="337"/>
    </location>
    <ligand>
        <name>substrate</name>
    </ligand>
</feature>
<feature type="binding site" evidence="1">
    <location>
        <begin position="338"/>
        <end position="340"/>
    </location>
    <ligand>
        <name>NAD(+)</name>
        <dbReference type="ChEBI" id="CHEBI:57540"/>
    </ligand>
</feature>
<feature type="binding site" evidence="1">
    <location>
        <position position="367"/>
    </location>
    <ligand>
        <name>substrate</name>
    </ligand>
</feature>
<feature type="binding site" evidence="1">
    <location>
        <position position="371"/>
    </location>
    <ligand>
        <name>substrate</name>
    </ligand>
</feature>
<feature type="binding site" evidence="1">
    <location>
        <position position="372"/>
    </location>
    <ligand>
        <name>NAD(+)</name>
        <dbReference type="ChEBI" id="CHEBI:57540"/>
    </ligand>
</feature>
<feature type="binding site" evidence="1">
    <location>
        <begin position="403"/>
        <end position="408"/>
    </location>
    <ligand>
        <name>NAD(+)</name>
        <dbReference type="ChEBI" id="CHEBI:57540"/>
    </ligand>
</feature>
<feature type="binding site" evidence="3">
    <location>
        <position position="424"/>
    </location>
    <ligand>
        <name>NAD(+)</name>
        <dbReference type="ChEBI" id="CHEBI:57540"/>
    </ligand>
</feature>
<feature type="binding site" evidence="3">
    <location>
        <position position="459"/>
    </location>
    <ligand>
        <name>NAD(+)</name>
        <dbReference type="ChEBI" id="CHEBI:57540"/>
    </ligand>
</feature>
<feature type="binding site" evidence="1">
    <location>
        <begin position="480"/>
        <end position="482"/>
    </location>
    <ligand>
        <name>NAD(+)</name>
        <dbReference type="ChEBI" id="CHEBI:57540"/>
    </ligand>
</feature>
<feature type="binding site" evidence="3">
    <location>
        <position position="527"/>
    </location>
    <ligand>
        <name>NAD(+)</name>
        <dbReference type="ChEBI" id="CHEBI:57540"/>
    </ligand>
</feature>
<feature type="modified residue" description="N-acetylserine" evidence="3">
    <location>
        <position position="2"/>
    </location>
</feature>
<feature type="modified residue" description="Phosphoserine" evidence="9">
    <location>
        <position position="109"/>
    </location>
</feature>
<feature type="modified residue" description="Phosphoserine" evidence="3">
    <location>
        <position position="151"/>
    </location>
</feature>
<feature type="modified residue" description="Phosphoserine" evidence="3">
    <location>
        <position position="154"/>
    </location>
</feature>
<feature type="modified residue" description="Phosphoserine" evidence="3">
    <location>
        <position position="157"/>
    </location>
</feature>
<feature type="modified residue" description="Phosphoserine" evidence="3">
    <location>
        <position position="160"/>
    </location>
</feature>
<feature type="splice variant" id="VSP_017821" description="In isoform 2." evidence="6">
    <original>MSVQVVSAAAAAKVPEVELKDLSPSEAEPQLGLSAAAVGAMVPPAGGGDPEAPAPAPAAERPPAPGPGSGPTAALSPAAGKVPQASAMKRSDPHHQHQRHRDGGEALVSPDGTVTEAPRTVKK</original>
    <variation>MLSSKKKYIVNSNSGIKA</variation>
    <location>
        <begin position="1"/>
        <end position="123"/>
    </location>
</feature>
<feature type="sequence conflict" description="In Ref. 1; BAC35415." evidence="8" ref="1">
    <original>L</original>
    <variation>V</variation>
    <location>
        <position position="440"/>
    </location>
</feature>
<comment type="function">
    <text evidence="2 3">May regulate the electrogenic sodium/bicarbonate cotransporter SLC4A4 activity and Mg(2+)-sensitivity. On the contrary of its homolog AHCYL1, does not regulate ITPR1 sensitivity to inositol 1,4,5-trisphosphate.</text>
</comment>
<comment type="catalytic activity">
    <reaction>
        <text>S-adenosyl-L-homocysteine + H2O = L-homocysteine + adenosine</text>
        <dbReference type="Rhea" id="RHEA:21708"/>
        <dbReference type="ChEBI" id="CHEBI:15377"/>
        <dbReference type="ChEBI" id="CHEBI:16335"/>
        <dbReference type="ChEBI" id="CHEBI:57856"/>
        <dbReference type="ChEBI" id="CHEBI:58199"/>
        <dbReference type="EC" id="3.13.2.1"/>
    </reaction>
</comment>
<comment type="cofactor">
    <cofactor evidence="1">
        <name>NAD(+)</name>
        <dbReference type="ChEBI" id="CHEBI:57540"/>
    </cofactor>
    <text evidence="1">Binds 1 NAD(+) per subunit.</text>
</comment>
<comment type="pathway">
    <text>Amino-acid biosynthesis; L-homocysteine biosynthesis; L-homocysteine from S-adenosyl-L-homocysteine: step 1/1.</text>
</comment>
<comment type="subunit">
    <text evidence="2 3">Homotetramer. Forms heteromultimers with AHCYL1 (via the C-terminal region). Interacts with ITPR1; with lower affinity than AHCYL1 and maybe via ITPR1. Interacts with SLC4A4. Interacts with ZCCHC4 (By similarity).</text>
</comment>
<comment type="subcellular location">
    <subcellularLocation>
        <location evidence="2 5">Cytoplasm</location>
    </subcellularLocation>
    <subcellularLocation>
        <location evidence="5">Microsome</location>
    </subcellularLocation>
    <text evidence="5">Associates with membranes when phosphorylated, probably through interaction with ITPR1.</text>
</comment>
<comment type="alternative products">
    <event type="alternative splicing"/>
    <isoform>
        <id>Q68FL4-1</id>
        <name>1</name>
        <sequence type="displayed"/>
    </isoform>
    <isoform>
        <id>Q68FL4-2</id>
        <name>2</name>
        <sequence type="described" ref="VSP_017821"/>
    </isoform>
</comment>
<comment type="tissue specificity">
    <text evidence="5">Highly expressed in cerebrum, cerebellum and kidney. Also expressed in thymus, spleen, testis, ovary and, at lower, levels in lung and liver (at protein level). In cerebellum, expressed in interneurons.</text>
</comment>
<comment type="PTM">
    <text evidence="5">Phosphorylated during neuronal differentiation at the LISN domain.</text>
</comment>
<comment type="similarity">
    <text evidence="8">Belongs to the adenosylhomocysteinase family.</text>
</comment>
<evidence type="ECO:0000250" key="1"/>
<evidence type="ECO:0000250" key="2">
    <source>
        <dbReference type="UniProtKB" id="A6QLP2"/>
    </source>
</evidence>
<evidence type="ECO:0000250" key="3">
    <source>
        <dbReference type="UniProtKB" id="Q96HN2"/>
    </source>
</evidence>
<evidence type="ECO:0000256" key="4">
    <source>
        <dbReference type="SAM" id="MobiDB-lite"/>
    </source>
</evidence>
<evidence type="ECO:0000269" key="5">
    <source>
    </source>
</evidence>
<evidence type="ECO:0000303" key="6">
    <source>
    </source>
</evidence>
<evidence type="ECO:0000303" key="7">
    <source>
    </source>
</evidence>
<evidence type="ECO:0000305" key="8"/>
<evidence type="ECO:0007744" key="9">
    <source>
    </source>
</evidence>
<sequence length="613" mass="66899">MSVQVVSAAAAAKVPEVELKDLSPSEAEPQLGLSAAAVGAMVPPAGGGDPEAPAPAPAAERPPAPGPGSGPTAALSPAAGKVPQASAMKRSDPHHQHQRHRDGGEALVSPDGTVTEAPRTVKKQIQFADQKQEFNKRPTKIGRRSLSRSISQSSTDSYSSAASYTDSSDDETSPRDKQQKNSKGSSDFCVKNIKQAEFGRREIEIAEQEMPALMALRKRAQGEKPLAGAKIVGCTHITAQTAVLMETLGALGAQCRWAACNIYSTLNEVAAALAESGFPVFAWKGESEDDFWWCIDRCVNVEGWQPNMILDDGGDLTHWIYKKYPNMFKKIKGIVEESVTGVHRLYQLSKAGKLCVPAMNVNDSVTKQKFDNLYCCRESILDGLKRTTDMMFGGKQVVVCGYGEVGKGCCAALKAMGSIVYVTEIDPICALQACMDGFRLVKLNEVIRQVDIVITCTGNKNVVTREHLDRMKNSCIVCNMGHSNTEIDVASLRTPELTWERVRSQVDHVIWPDGKRIVLLAEGRLLNLSCSTVPTFVLSITATTQALALIELYNAPEGRYKQDVYLLPKKMDEYVASLHLPTFDAHLTELTDEQAKYLGLNKNGPFKPNYYRY</sequence>
<organism>
    <name type="scientific">Mus musculus</name>
    <name type="common">Mouse</name>
    <dbReference type="NCBI Taxonomy" id="10090"/>
    <lineage>
        <taxon>Eukaryota</taxon>
        <taxon>Metazoa</taxon>
        <taxon>Chordata</taxon>
        <taxon>Craniata</taxon>
        <taxon>Vertebrata</taxon>
        <taxon>Euteleostomi</taxon>
        <taxon>Mammalia</taxon>
        <taxon>Eutheria</taxon>
        <taxon>Euarchontoglires</taxon>
        <taxon>Glires</taxon>
        <taxon>Rodentia</taxon>
        <taxon>Myomorpha</taxon>
        <taxon>Muroidea</taxon>
        <taxon>Muridae</taxon>
        <taxon>Murinae</taxon>
        <taxon>Mus</taxon>
        <taxon>Mus</taxon>
    </lineage>
</organism>
<protein>
    <recommendedName>
        <fullName>Putative adenosylhomocysteinase 3</fullName>
        <shortName>AdoHcyase 3</shortName>
        <ecNumber>3.13.2.1</ecNumber>
    </recommendedName>
    <alternativeName>
        <fullName evidence="7">Long-IRBIT</fullName>
    </alternativeName>
    <alternativeName>
        <fullName>S-adenosyl-L-homocysteine hydrolase 3</fullName>
    </alternativeName>
    <alternativeName>
        <fullName>S-adenosylhomocysteine hydrolase-like protein 2</fullName>
    </alternativeName>
</protein>
<keyword id="KW-0007">Acetylation</keyword>
<keyword id="KW-0025">Alternative splicing</keyword>
<keyword id="KW-0963">Cytoplasm</keyword>
<keyword id="KW-0256">Endoplasmic reticulum</keyword>
<keyword id="KW-0378">Hydrolase</keyword>
<keyword id="KW-0492">Microsome</keyword>
<keyword id="KW-0520">NAD</keyword>
<keyword id="KW-0554">One-carbon metabolism</keyword>
<keyword id="KW-0597">Phosphoprotein</keyword>
<keyword id="KW-1185">Reference proteome</keyword>